<accession>Q4FNF9</accession>
<feature type="chain" id="PRO_1000017133" description="tRNA pseudouridine synthase A">
    <location>
        <begin position="1"/>
        <end position="246"/>
    </location>
</feature>
<feature type="active site" description="Nucleophile" evidence="1">
    <location>
        <position position="52"/>
    </location>
</feature>
<feature type="binding site" evidence="1">
    <location>
        <position position="112"/>
    </location>
    <ligand>
        <name>substrate</name>
    </ligand>
</feature>
<comment type="function">
    <text evidence="1">Formation of pseudouridine at positions 38, 39 and 40 in the anticodon stem and loop of transfer RNAs.</text>
</comment>
<comment type="catalytic activity">
    <reaction evidence="1">
        <text>uridine(38/39/40) in tRNA = pseudouridine(38/39/40) in tRNA</text>
        <dbReference type="Rhea" id="RHEA:22376"/>
        <dbReference type="Rhea" id="RHEA-COMP:10085"/>
        <dbReference type="Rhea" id="RHEA-COMP:10087"/>
        <dbReference type="ChEBI" id="CHEBI:65314"/>
        <dbReference type="ChEBI" id="CHEBI:65315"/>
        <dbReference type="EC" id="5.4.99.12"/>
    </reaction>
</comment>
<comment type="subunit">
    <text evidence="1">Homodimer.</text>
</comment>
<comment type="similarity">
    <text evidence="1">Belongs to the tRNA pseudouridine synthase TruA family.</text>
</comment>
<organism>
    <name type="scientific">Pelagibacter ubique (strain HTCC1062)</name>
    <dbReference type="NCBI Taxonomy" id="335992"/>
    <lineage>
        <taxon>Bacteria</taxon>
        <taxon>Pseudomonadati</taxon>
        <taxon>Pseudomonadota</taxon>
        <taxon>Alphaproteobacteria</taxon>
        <taxon>Candidatus Pelagibacterales</taxon>
        <taxon>Candidatus Pelagibacteraceae</taxon>
        <taxon>Candidatus Pelagibacter</taxon>
    </lineage>
</organism>
<sequence length="246" mass="28393">MFRYQVLIEYIGTNFVGWQIQSKGKSIQKEIQVKLSKFLKEKVVLIGSGRTDAGVHAIEQSAHFDCKKEIQNLDKLLKSINHFINDKGISVLAIKKRSLKFHARHSAKQRIYKYIIFNRLSKPSLEKERGWHIIKKLDIELMKKGSKKLLGTKDFSTFRASSCNAKSPIKTMKSVNIKSKDGRIEIQFKSQSFLQQQVRSMVGSLKYLAENKWDLKKFEFVIKSKKRILCAPPAPAEGLFLEKVIY</sequence>
<protein>
    <recommendedName>
        <fullName evidence="1">tRNA pseudouridine synthase A</fullName>
        <ecNumber evidence="1">5.4.99.12</ecNumber>
    </recommendedName>
    <alternativeName>
        <fullName evidence="1">tRNA pseudouridine(38-40) synthase</fullName>
    </alternativeName>
    <alternativeName>
        <fullName evidence="1">tRNA pseudouridylate synthase I</fullName>
    </alternativeName>
    <alternativeName>
        <fullName evidence="1">tRNA-uridine isomerase I</fullName>
    </alternativeName>
</protein>
<dbReference type="EC" id="5.4.99.12" evidence="1"/>
<dbReference type="EMBL" id="CP000084">
    <property type="protein sequence ID" value="AAZ21280.1"/>
    <property type="molecule type" value="Genomic_DNA"/>
</dbReference>
<dbReference type="RefSeq" id="WP_011281726.1">
    <property type="nucleotide sequence ID" value="NC_007205.1"/>
</dbReference>
<dbReference type="SMR" id="Q4FNF9"/>
<dbReference type="STRING" id="335992.SAR11_0458"/>
<dbReference type="GeneID" id="66294957"/>
<dbReference type="KEGG" id="pub:SAR11_0458"/>
<dbReference type="eggNOG" id="COG0101">
    <property type="taxonomic scope" value="Bacteria"/>
</dbReference>
<dbReference type="HOGENOM" id="CLU_014673_0_2_5"/>
<dbReference type="OrthoDB" id="9811823at2"/>
<dbReference type="Proteomes" id="UP000002528">
    <property type="component" value="Chromosome"/>
</dbReference>
<dbReference type="GO" id="GO:0003723">
    <property type="term" value="F:RNA binding"/>
    <property type="evidence" value="ECO:0007669"/>
    <property type="project" value="InterPro"/>
</dbReference>
<dbReference type="GO" id="GO:0160147">
    <property type="term" value="F:tRNA pseudouridine(38-40) synthase activity"/>
    <property type="evidence" value="ECO:0007669"/>
    <property type="project" value="UniProtKB-EC"/>
</dbReference>
<dbReference type="GO" id="GO:0031119">
    <property type="term" value="P:tRNA pseudouridine synthesis"/>
    <property type="evidence" value="ECO:0007669"/>
    <property type="project" value="UniProtKB-UniRule"/>
</dbReference>
<dbReference type="CDD" id="cd02570">
    <property type="entry name" value="PseudoU_synth_EcTruA"/>
    <property type="match status" value="1"/>
</dbReference>
<dbReference type="Gene3D" id="3.30.70.660">
    <property type="entry name" value="Pseudouridine synthase I, catalytic domain, C-terminal subdomain"/>
    <property type="match status" value="1"/>
</dbReference>
<dbReference type="Gene3D" id="3.30.70.580">
    <property type="entry name" value="Pseudouridine synthase I, catalytic domain, N-terminal subdomain"/>
    <property type="match status" value="1"/>
</dbReference>
<dbReference type="HAMAP" id="MF_00171">
    <property type="entry name" value="TruA"/>
    <property type="match status" value="1"/>
</dbReference>
<dbReference type="InterPro" id="IPR020103">
    <property type="entry name" value="PsdUridine_synth_cat_dom_sf"/>
</dbReference>
<dbReference type="InterPro" id="IPR001406">
    <property type="entry name" value="PsdUridine_synth_TruA"/>
</dbReference>
<dbReference type="InterPro" id="IPR020097">
    <property type="entry name" value="PsdUridine_synth_TruA_a/b_dom"/>
</dbReference>
<dbReference type="InterPro" id="IPR020095">
    <property type="entry name" value="PsdUridine_synth_TruA_C"/>
</dbReference>
<dbReference type="InterPro" id="IPR020094">
    <property type="entry name" value="TruA/RsuA/RluB/E/F_N"/>
</dbReference>
<dbReference type="NCBIfam" id="TIGR00071">
    <property type="entry name" value="hisT_truA"/>
    <property type="match status" value="1"/>
</dbReference>
<dbReference type="PANTHER" id="PTHR11142">
    <property type="entry name" value="PSEUDOURIDYLATE SYNTHASE"/>
    <property type="match status" value="1"/>
</dbReference>
<dbReference type="PANTHER" id="PTHR11142:SF0">
    <property type="entry name" value="TRNA PSEUDOURIDINE SYNTHASE-LIKE 1"/>
    <property type="match status" value="1"/>
</dbReference>
<dbReference type="Pfam" id="PF01416">
    <property type="entry name" value="PseudoU_synth_1"/>
    <property type="match status" value="2"/>
</dbReference>
<dbReference type="PIRSF" id="PIRSF001430">
    <property type="entry name" value="tRNA_psdUrid_synth"/>
    <property type="match status" value="1"/>
</dbReference>
<dbReference type="SUPFAM" id="SSF55120">
    <property type="entry name" value="Pseudouridine synthase"/>
    <property type="match status" value="1"/>
</dbReference>
<keyword id="KW-0413">Isomerase</keyword>
<keyword id="KW-1185">Reference proteome</keyword>
<keyword id="KW-0819">tRNA processing</keyword>
<evidence type="ECO:0000255" key="1">
    <source>
        <dbReference type="HAMAP-Rule" id="MF_00171"/>
    </source>
</evidence>
<reference key="1">
    <citation type="journal article" date="2005" name="Science">
        <title>Genome streamlining in a cosmopolitan oceanic bacterium.</title>
        <authorList>
            <person name="Giovannoni S.J."/>
            <person name="Tripp H.J."/>
            <person name="Givan S."/>
            <person name="Podar M."/>
            <person name="Vergin K.L."/>
            <person name="Baptista D."/>
            <person name="Bibbs L."/>
            <person name="Eads J."/>
            <person name="Richardson T.H."/>
            <person name="Noordewier M."/>
            <person name="Rappe M.S."/>
            <person name="Short J.M."/>
            <person name="Carrington J.C."/>
            <person name="Mathur E.J."/>
        </authorList>
    </citation>
    <scope>NUCLEOTIDE SEQUENCE [LARGE SCALE GENOMIC DNA]</scope>
    <source>
        <strain>HTCC1062</strain>
    </source>
</reference>
<name>TRUA_PELUB</name>
<proteinExistence type="inferred from homology"/>
<gene>
    <name evidence="1" type="primary">truA</name>
    <name type="ordered locus">SAR11_0458</name>
</gene>